<keyword id="KW-1003">Cell membrane</keyword>
<keyword id="KW-0963">Cytoplasm</keyword>
<keyword id="KW-0217">Developmental protein</keyword>
<keyword id="KW-0221">Differentiation</keyword>
<keyword id="KW-0472">Membrane</keyword>
<keyword id="KW-0524">Neurogenesis</keyword>
<keyword id="KW-0539">Nucleus</keyword>
<keyword id="KW-1185">Reference proteome</keyword>
<accession>P20695</accession>
<sequence length="449" mass="49783">MPKNKKRNAPHRGGGGGGGSGAATSAATTGGPHRTVQPFSDEDASIETMSHCSGYSDPSSFAEDGPEVLDEEGTQEDLEYKLKGLIDLTLDKSAKTRQAALEGVKNALSSKVLYEFVLERRMTLTDSIERCLKKGKSDGQRAAAALASVLCIQLGPGLESEEILKTLGPILKKIICDGTASIQARQTCATCFGVCCFIATDDITELYSTLECLEGIFTKSYLKEKDTNVPCSTPNTVLHISSLLAWTLLLTICPISEVKKKLELHFHKLPSLLSCDDVNMRIAAGESLALLFELARGMESDFFYEDMDSLTQMLRALATDGNKHRAKVDKRKQRSVFRDVLRAVEERDFPTETVKFGPERMYIDSWVKKHTYDTFKEALGSGMQYHLQTNEFLRNVFELGPPVMLDAATLKTMKIPRFERHLYNSAAFKARTKARSKCRDKRADVGEFF</sequence>
<organism>
    <name type="scientific">Rattus norvegicus</name>
    <name type="common">Rat</name>
    <dbReference type="NCBI Taxonomy" id="10116"/>
    <lineage>
        <taxon>Eukaryota</taxon>
        <taxon>Metazoa</taxon>
        <taxon>Chordata</taxon>
        <taxon>Craniata</taxon>
        <taxon>Vertebrata</taxon>
        <taxon>Euteleostomi</taxon>
        <taxon>Mammalia</taxon>
        <taxon>Eutheria</taxon>
        <taxon>Euarchontoglires</taxon>
        <taxon>Glires</taxon>
        <taxon>Rodentia</taxon>
        <taxon>Myomorpha</taxon>
        <taxon>Muroidea</taxon>
        <taxon>Muridae</taxon>
        <taxon>Murinae</taxon>
        <taxon>Rattus</taxon>
    </lineage>
</organism>
<gene>
    <name type="primary">Ifrd1</name>
    <name type="synonym">Pc4</name>
</gene>
<proteinExistence type="evidence at transcript level"/>
<evidence type="ECO:0000250" key="1"/>
<evidence type="ECO:0000256" key="2">
    <source>
        <dbReference type="SAM" id="MobiDB-lite"/>
    </source>
</evidence>
<evidence type="ECO:0000269" key="3">
    <source>
    </source>
</evidence>
<evidence type="ECO:0000305" key="4"/>
<dbReference type="EMBL" id="J04511">
    <property type="protein sequence ID" value="AAC28946.1"/>
    <property type="molecule type" value="mRNA"/>
</dbReference>
<dbReference type="PIR" id="A30303">
    <property type="entry name" value="A30303"/>
</dbReference>
<dbReference type="RefSeq" id="NP_062115.1">
    <property type="nucleotide sequence ID" value="NM_019242.1"/>
</dbReference>
<dbReference type="SMR" id="P20695"/>
<dbReference type="FunCoup" id="P20695">
    <property type="interactions" value="2565"/>
</dbReference>
<dbReference type="STRING" id="10116.ENSRNOP00000067730"/>
<dbReference type="PhosphoSitePlus" id="P20695"/>
<dbReference type="PaxDb" id="10116-ENSRNOP00000067730"/>
<dbReference type="GeneID" id="29596"/>
<dbReference type="KEGG" id="rno:29596"/>
<dbReference type="AGR" id="RGD:2867"/>
<dbReference type="CTD" id="3475"/>
<dbReference type="RGD" id="2867">
    <property type="gene designation" value="Ifrd1"/>
</dbReference>
<dbReference type="eggNOG" id="KOG2842">
    <property type="taxonomic scope" value="Eukaryota"/>
</dbReference>
<dbReference type="InParanoid" id="P20695"/>
<dbReference type="OrthoDB" id="686784at2759"/>
<dbReference type="PhylomeDB" id="P20695"/>
<dbReference type="PRO" id="PR:P20695"/>
<dbReference type="Proteomes" id="UP000002494">
    <property type="component" value="Unplaced"/>
</dbReference>
<dbReference type="GO" id="GO:0005737">
    <property type="term" value="C:cytoplasm"/>
    <property type="evidence" value="ECO:0000266"/>
    <property type="project" value="RGD"/>
</dbReference>
<dbReference type="GO" id="GO:0005634">
    <property type="term" value="C:nucleus"/>
    <property type="evidence" value="ECO:0000266"/>
    <property type="project" value="RGD"/>
</dbReference>
<dbReference type="GO" id="GO:0005886">
    <property type="term" value="C:plasma membrane"/>
    <property type="evidence" value="ECO:0007669"/>
    <property type="project" value="UniProtKB-SubCell"/>
</dbReference>
<dbReference type="GO" id="GO:0016528">
    <property type="term" value="C:sarcoplasm"/>
    <property type="evidence" value="ECO:0000266"/>
    <property type="project" value="RGD"/>
</dbReference>
<dbReference type="GO" id="GO:0061629">
    <property type="term" value="F:RNA polymerase II-specific DNA-binding transcription factor binding"/>
    <property type="evidence" value="ECO:0000353"/>
    <property type="project" value="MGI"/>
</dbReference>
<dbReference type="GO" id="GO:0014009">
    <property type="term" value="P:glial cell proliferation"/>
    <property type="evidence" value="ECO:0000270"/>
    <property type="project" value="RGD"/>
</dbReference>
<dbReference type="GO" id="GO:0042692">
    <property type="term" value="P:muscle cell differentiation"/>
    <property type="evidence" value="ECO:0000266"/>
    <property type="project" value="RGD"/>
</dbReference>
<dbReference type="GO" id="GO:0030517">
    <property type="term" value="P:negative regulation of axon extension"/>
    <property type="evidence" value="ECO:0000266"/>
    <property type="project" value="RGD"/>
</dbReference>
<dbReference type="GO" id="GO:0048671">
    <property type="term" value="P:negative regulation of collateral sprouting"/>
    <property type="evidence" value="ECO:0000266"/>
    <property type="project" value="RGD"/>
</dbReference>
<dbReference type="GO" id="GO:0007405">
    <property type="term" value="P:neuroblast proliferation"/>
    <property type="evidence" value="ECO:0000270"/>
    <property type="project" value="RGD"/>
</dbReference>
<dbReference type="GO" id="GO:0051091">
    <property type="term" value="P:positive regulation of DNA-binding transcription factor activity"/>
    <property type="evidence" value="ECO:0000316"/>
    <property type="project" value="MGI"/>
</dbReference>
<dbReference type="GO" id="GO:0045944">
    <property type="term" value="P:positive regulation of transcription by RNA polymerase II"/>
    <property type="evidence" value="ECO:0000316"/>
    <property type="project" value="MGI"/>
</dbReference>
<dbReference type="GO" id="GO:0043403">
    <property type="term" value="P:skeletal muscle tissue regeneration"/>
    <property type="evidence" value="ECO:0000266"/>
    <property type="project" value="RGD"/>
</dbReference>
<dbReference type="GO" id="GO:0014706">
    <property type="term" value="P:striated muscle tissue development"/>
    <property type="evidence" value="ECO:0000266"/>
    <property type="project" value="RGD"/>
</dbReference>
<dbReference type="FunFam" id="1.25.10.10:FF:000259">
    <property type="entry name" value="interferon-related developmental regulator 1"/>
    <property type="match status" value="1"/>
</dbReference>
<dbReference type="Gene3D" id="1.25.10.10">
    <property type="entry name" value="Leucine-rich Repeat Variant"/>
    <property type="match status" value="1"/>
</dbReference>
<dbReference type="InterPro" id="IPR011989">
    <property type="entry name" value="ARM-like"/>
</dbReference>
<dbReference type="InterPro" id="IPR016024">
    <property type="entry name" value="ARM-type_fold"/>
</dbReference>
<dbReference type="InterPro" id="IPR039777">
    <property type="entry name" value="IFRD"/>
</dbReference>
<dbReference type="InterPro" id="IPR006921">
    <property type="entry name" value="Interferon-rel_develop_reg_C"/>
</dbReference>
<dbReference type="InterPro" id="IPR007701">
    <property type="entry name" value="Interferon-rel_develop_reg_N"/>
</dbReference>
<dbReference type="PANTHER" id="PTHR12354">
    <property type="entry name" value="INTERFERON-RELATED DEVELOPMENTAL REGULATOR"/>
    <property type="match status" value="1"/>
</dbReference>
<dbReference type="PANTHER" id="PTHR12354:SF6">
    <property type="entry name" value="INTERFERON-RELATED DEVELOPMENTAL REGULATOR 1"/>
    <property type="match status" value="1"/>
</dbReference>
<dbReference type="Pfam" id="PF05004">
    <property type="entry name" value="IFRD"/>
    <property type="match status" value="1"/>
</dbReference>
<dbReference type="Pfam" id="PF04836">
    <property type="entry name" value="IFRD_C"/>
    <property type="match status" value="1"/>
</dbReference>
<dbReference type="SUPFAM" id="SSF48371">
    <property type="entry name" value="ARM repeat"/>
    <property type="match status" value="1"/>
</dbReference>
<protein>
    <recommendedName>
        <fullName>Interferon-related developmental regulator 1</fullName>
    </recommendedName>
    <alternativeName>
        <fullName>IRPR</fullName>
    </alternativeName>
    <alternativeName>
        <fullName>Nerve growth factor-inducible protein PC4</fullName>
    </alternativeName>
</protein>
<feature type="chain" id="PRO_0000153288" description="Interferon-related developmental regulator 1">
    <location>
        <begin position="1"/>
        <end position="449"/>
    </location>
</feature>
<feature type="region of interest" description="Disordered" evidence="2">
    <location>
        <begin position="1"/>
        <end position="41"/>
    </location>
</feature>
<feature type="compositionally biased region" description="Basic residues" evidence="2">
    <location>
        <begin position="1"/>
        <end position="10"/>
    </location>
</feature>
<feature type="compositionally biased region" description="Gly residues" evidence="2">
    <location>
        <begin position="12"/>
        <end position="21"/>
    </location>
</feature>
<feature type="compositionally biased region" description="Low complexity" evidence="2">
    <location>
        <begin position="22"/>
        <end position="31"/>
    </location>
</feature>
<reference key="1">
    <citation type="journal article" date="1989" name="Proc. Natl. Acad. Sci. U.S.A.">
        <title>Early gene regulation by nerve growth factor in PC12 cells: induction of an interferon-related gene.</title>
        <authorList>
            <person name="Tirone F."/>
            <person name="Shooter E.M."/>
        </authorList>
    </citation>
    <scope>NUCLEOTIDE SEQUENCE [MRNA]</scope>
</reference>
<reference key="2">
    <citation type="journal article" date="1994" name="J. Neurosci. Res.">
        <title>Nerve growth factor regulates the subcellular localization of the nerve growth factor-inducible protein PC4 in PC12 cells.</title>
        <authorList>
            <person name="Guardavaccaro D."/>
            <person name="Montagnoli A."/>
            <person name="Ciotti M.T."/>
            <person name="Gatti A."/>
            <person name="Lotti L."/>
            <person name="di Lazzaro C."/>
            <person name="Torrisi M.R."/>
            <person name="Tirone F."/>
        </authorList>
    </citation>
    <scope>SUBCELLULAR LOCATION</scope>
</reference>
<name>IFRD1_RAT</name>
<comment type="function">
    <text>Probably participates in neurogenesis. Could play a role in regulating gene activity in the proliferative and/or differentiative pathways induced by NGF.</text>
</comment>
<comment type="subunit">
    <text evidence="1">Interacts with PSIP1/LEDGF.</text>
</comment>
<comment type="subcellular location">
    <subcellularLocation>
        <location evidence="3">Cytoplasm</location>
    </subcellularLocation>
    <subcellularLocation>
        <location evidence="3">Cell membrane</location>
    </subcellularLocation>
    <subcellularLocation>
        <location evidence="3">Nucleus</location>
    </subcellularLocation>
    <text>Presents a NGF-dependent pattern of intracellular localization. With increasing amounts of NGF and besides being expressed in the cytoplasm, it is also localized in the plasma membrane (inner side) at the onset of NGF-induced differentiation, from where it disappears to reappear in the nuclei of differentiated cells.</text>
</comment>
<comment type="tissue specificity">
    <text>Expressed at high levels in the embryonic brain in the period related to neuroblast proliferation and differentiation.</text>
</comment>
<comment type="developmental stage">
    <text>Activated at the onset of neuronal differentiation.</text>
</comment>
<comment type="induction">
    <text>By nerve growth factor.</text>
</comment>
<comment type="similarity">
    <text evidence="4">Belongs to the IFRD family.</text>
</comment>